<accession>Q9D2E1</accession>
<accession>Q9JL98</accession>
<keyword id="KW-0067">ATP-binding</keyword>
<keyword id="KW-0966">Cell projection</keyword>
<keyword id="KW-0969">Cilium</keyword>
<keyword id="KW-0217">Developmental protein</keyword>
<keyword id="KW-0221">Differentiation</keyword>
<keyword id="KW-0282">Flagellum</keyword>
<keyword id="KW-0418">Kinase</keyword>
<keyword id="KW-0460">Magnesium</keyword>
<keyword id="KW-0479">Metal-binding</keyword>
<keyword id="KW-0547">Nucleotide-binding</keyword>
<keyword id="KW-0597">Phosphoprotein</keyword>
<keyword id="KW-1185">Reference proteome</keyword>
<keyword id="KW-0723">Serine/threonine-protein kinase</keyword>
<keyword id="KW-0744">Spermatogenesis</keyword>
<keyword id="KW-0808">Transferase</keyword>
<comment type="function">
    <text evidence="5 6">Serine/threonine protein kinase required for spermatid development and male fertility.</text>
</comment>
<comment type="catalytic activity">
    <reaction evidence="5">
        <text>L-seryl-[protein] + ATP = O-phospho-L-seryl-[protein] + ADP + H(+)</text>
        <dbReference type="Rhea" id="RHEA:17989"/>
        <dbReference type="Rhea" id="RHEA-COMP:9863"/>
        <dbReference type="Rhea" id="RHEA-COMP:11604"/>
        <dbReference type="ChEBI" id="CHEBI:15378"/>
        <dbReference type="ChEBI" id="CHEBI:29999"/>
        <dbReference type="ChEBI" id="CHEBI:30616"/>
        <dbReference type="ChEBI" id="CHEBI:83421"/>
        <dbReference type="ChEBI" id="CHEBI:456216"/>
        <dbReference type="EC" id="2.7.11.1"/>
    </reaction>
    <physiologicalReaction direction="left-to-right" evidence="5">
        <dbReference type="Rhea" id="RHEA:17990"/>
    </physiologicalReaction>
</comment>
<comment type="catalytic activity">
    <reaction evidence="5">
        <text>L-threonyl-[protein] + ATP = O-phospho-L-threonyl-[protein] + ADP + H(+)</text>
        <dbReference type="Rhea" id="RHEA:46608"/>
        <dbReference type="Rhea" id="RHEA-COMP:11060"/>
        <dbReference type="Rhea" id="RHEA-COMP:11605"/>
        <dbReference type="ChEBI" id="CHEBI:15378"/>
        <dbReference type="ChEBI" id="CHEBI:30013"/>
        <dbReference type="ChEBI" id="CHEBI:30616"/>
        <dbReference type="ChEBI" id="CHEBI:61977"/>
        <dbReference type="ChEBI" id="CHEBI:456216"/>
        <dbReference type="EC" id="2.7.11.1"/>
    </reaction>
    <physiologicalReaction direction="left-to-right" evidence="5">
        <dbReference type="Rhea" id="RHEA:46609"/>
    </physiologicalReaction>
</comment>
<comment type="cofactor">
    <cofactor evidence="5">
        <name>Mg(2+)</name>
        <dbReference type="ChEBI" id="CHEBI:18420"/>
    </cofactor>
    <cofactor evidence="5">
        <name>Mn(2+)</name>
        <dbReference type="ChEBI" id="CHEBI:29035"/>
    </cofactor>
    <text evidence="5">Can use both Mg(2+) and Mn(2+) as cofactor, with a preference for Mn(2+) in vitro.</text>
</comment>
<comment type="activity regulation">
    <text evidence="5">Activated by phosphorylation on Thr-168 by PDPK1.</text>
</comment>
<comment type="biophysicochemical properties">
    <phDependence>
        <text evidence="5">Optimum pH is 7.4.</text>
    </phDependence>
    <temperatureDependence>
        <text evidence="5">Optimum temperature is 30 degrees Celsius.</text>
    </temperatureDependence>
</comment>
<comment type="subcellular location">
    <subcellularLocation>
        <location evidence="6">Cell projection</location>
        <location evidence="6">Cilium</location>
        <location evidence="6">Flagellum</location>
    </subcellularLocation>
    <text evidence="6">Localizes to the sperm flagellum in mature sperm.</text>
</comment>
<comment type="tissue specificity">
    <text evidence="3">Developmentally expressed in testicular germ cells. In adult testis, expression was detected in round and condensing spermatids, but not in meiotic pachytene spermatocytes. Not expressed in brain, ovary, kidney, liver or early embryonic cells.</text>
</comment>
<comment type="developmental stage">
    <text evidence="4">Expression begins 20-24 days after birth and is maximal in the adult, suggesting it is expressed postmeiotically.</text>
</comment>
<comment type="PTM">
    <text evidence="5">Autophosphorylated at Ser-166 (PubMed:16336268). Phosphorylation at Thr-168 by PDPK1 activates the serine/threonine protein kinase activity (PubMed:16336268).</text>
</comment>
<comment type="disruption phenotype">
    <text evidence="6">Male mice are sterile due to defects in spermatid development (PubMed:34623009). Sperm numbers are drastically reduced and round spermatids are detected in the cauda epididymis (PubMed:34623009). From the small population of sperm recovered, severe morphology defects are detected (PubMed:34623009).</text>
</comment>
<comment type="similarity">
    <text evidence="9">Belongs to the protein kinase superfamily. CAMK Ser/Thr protein kinase family.</text>
</comment>
<comment type="caution">
    <text evidence="10">Was named 'STK22D' as it was then thought that STK22C and STK22D were two different closely related genes.</text>
</comment>
<comment type="sequence caution" evidence="9">
    <conflict type="frameshift">
        <sequence resource="EMBL-CDS" id="AAF72581"/>
    </conflict>
</comment>
<dbReference type="EC" id="2.7.11.1" evidence="5"/>
<dbReference type="EMBL" id="AF298901">
    <property type="protein sequence ID" value="AAK97209.1"/>
    <property type="molecule type" value="mRNA"/>
</dbReference>
<dbReference type="EMBL" id="AF201734">
    <property type="protein sequence ID" value="AAF72581.1"/>
    <property type="status" value="ALT_FRAME"/>
    <property type="molecule type" value="mRNA"/>
</dbReference>
<dbReference type="EMBL" id="AK019840">
    <property type="protein sequence ID" value="BAB31876.1"/>
    <property type="molecule type" value="mRNA"/>
</dbReference>
<dbReference type="EMBL" id="BC048470">
    <property type="protein sequence ID" value="AAH48470.1"/>
    <property type="molecule type" value="mRNA"/>
</dbReference>
<dbReference type="CCDS" id="CCDS18693.1"/>
<dbReference type="RefSeq" id="NP_536690.1">
    <property type="nucleotide sequence ID" value="NM_080442.2"/>
</dbReference>
<dbReference type="RefSeq" id="XP_030109549.1">
    <property type="nucleotide sequence ID" value="XM_030253689.1"/>
</dbReference>
<dbReference type="SMR" id="Q9D2E1"/>
<dbReference type="BioGRID" id="208450">
    <property type="interactions" value="2"/>
</dbReference>
<dbReference type="FunCoup" id="Q9D2E1">
    <property type="interactions" value="265"/>
</dbReference>
<dbReference type="STRING" id="10090.ENSMUSP00000000421"/>
<dbReference type="iPTMnet" id="Q9D2E1"/>
<dbReference type="PhosphoSitePlus" id="Q9D2E1"/>
<dbReference type="PaxDb" id="10090-ENSMUSP00000000421"/>
<dbReference type="PeptideAtlas" id="Q9D2E1"/>
<dbReference type="ProteomicsDB" id="298149"/>
<dbReference type="Antibodypedia" id="31305">
    <property type="antibodies" value="94 antibodies from 22 providers"/>
</dbReference>
<dbReference type="DNASU" id="58864"/>
<dbReference type="Ensembl" id="ENSMUST00000000421.6">
    <property type="protein sequence ID" value="ENSMUSP00000000421.6"/>
    <property type="gene ID" value="ENSMUSG00000000411.8"/>
</dbReference>
<dbReference type="GeneID" id="58864"/>
<dbReference type="KEGG" id="mmu:58864"/>
<dbReference type="UCSC" id="uc008uxc.1">
    <property type="organism name" value="mouse"/>
</dbReference>
<dbReference type="AGR" id="MGI:1929914"/>
<dbReference type="CTD" id="81629"/>
<dbReference type="MGI" id="MGI:1929914">
    <property type="gene designation" value="Tssk3"/>
</dbReference>
<dbReference type="VEuPathDB" id="HostDB:ENSMUSG00000000411"/>
<dbReference type="eggNOG" id="KOG0583">
    <property type="taxonomic scope" value="Eukaryota"/>
</dbReference>
<dbReference type="GeneTree" id="ENSGT00940000161490"/>
<dbReference type="HOGENOM" id="CLU_000288_63_0_1"/>
<dbReference type="InParanoid" id="Q9D2E1"/>
<dbReference type="OMA" id="IRYCHDC"/>
<dbReference type="OrthoDB" id="541276at2759"/>
<dbReference type="PhylomeDB" id="Q9D2E1"/>
<dbReference type="TreeFam" id="TF352374"/>
<dbReference type="BioGRID-ORCS" id="58864">
    <property type="hits" value="2 hits in 81 CRISPR screens"/>
</dbReference>
<dbReference type="PRO" id="PR:Q9D2E1"/>
<dbReference type="Proteomes" id="UP000000589">
    <property type="component" value="Chromosome 4"/>
</dbReference>
<dbReference type="RNAct" id="Q9D2E1">
    <property type="molecule type" value="protein"/>
</dbReference>
<dbReference type="Bgee" id="ENSMUSG00000000411">
    <property type="expression patterns" value="Expressed in seminiferous tubule of testis and 12 other cell types or tissues"/>
</dbReference>
<dbReference type="GO" id="GO:0036126">
    <property type="term" value="C:sperm flagellum"/>
    <property type="evidence" value="ECO:0000314"/>
    <property type="project" value="UniProtKB"/>
</dbReference>
<dbReference type="GO" id="GO:0005524">
    <property type="term" value="F:ATP binding"/>
    <property type="evidence" value="ECO:0000250"/>
    <property type="project" value="UniProtKB"/>
</dbReference>
<dbReference type="GO" id="GO:0000287">
    <property type="term" value="F:magnesium ion binding"/>
    <property type="evidence" value="ECO:0000314"/>
    <property type="project" value="UniProtKB"/>
</dbReference>
<dbReference type="GO" id="GO:0030145">
    <property type="term" value="F:manganese ion binding"/>
    <property type="evidence" value="ECO:0000314"/>
    <property type="project" value="UniProtKB"/>
</dbReference>
<dbReference type="GO" id="GO:0106310">
    <property type="term" value="F:protein serine kinase activity"/>
    <property type="evidence" value="ECO:0007669"/>
    <property type="project" value="RHEA"/>
</dbReference>
<dbReference type="GO" id="GO:0004674">
    <property type="term" value="F:protein serine/threonine kinase activity"/>
    <property type="evidence" value="ECO:0000314"/>
    <property type="project" value="UniProtKB"/>
</dbReference>
<dbReference type="GO" id="GO:0035556">
    <property type="term" value="P:intracellular signal transduction"/>
    <property type="evidence" value="ECO:0000303"/>
    <property type="project" value="UniProtKB"/>
</dbReference>
<dbReference type="GO" id="GO:0006468">
    <property type="term" value="P:protein phosphorylation"/>
    <property type="evidence" value="ECO:0000250"/>
    <property type="project" value="UniProtKB"/>
</dbReference>
<dbReference type="GO" id="GO:0048240">
    <property type="term" value="P:sperm capacitation"/>
    <property type="evidence" value="ECO:0000303"/>
    <property type="project" value="UniProtKB"/>
</dbReference>
<dbReference type="GO" id="GO:0007286">
    <property type="term" value="P:spermatid development"/>
    <property type="evidence" value="ECO:0000315"/>
    <property type="project" value="UniProtKB"/>
</dbReference>
<dbReference type="GO" id="GO:0007283">
    <property type="term" value="P:spermatogenesis"/>
    <property type="evidence" value="ECO:0000270"/>
    <property type="project" value="UniProtKB"/>
</dbReference>
<dbReference type="CDD" id="cd14163">
    <property type="entry name" value="STKc_TSSK3-like"/>
    <property type="match status" value="1"/>
</dbReference>
<dbReference type="FunFam" id="3.30.200.20:FF:000042">
    <property type="entry name" value="Aurora kinase A"/>
    <property type="match status" value="1"/>
</dbReference>
<dbReference type="FunFam" id="1.10.510.10:FF:000485">
    <property type="entry name" value="testis-specific serine/threonine-protein kinase 3"/>
    <property type="match status" value="1"/>
</dbReference>
<dbReference type="Gene3D" id="1.10.510.10">
    <property type="entry name" value="Transferase(Phosphotransferase) domain 1"/>
    <property type="match status" value="1"/>
</dbReference>
<dbReference type="InterPro" id="IPR011009">
    <property type="entry name" value="Kinase-like_dom_sf"/>
</dbReference>
<dbReference type="InterPro" id="IPR000719">
    <property type="entry name" value="Prot_kinase_dom"/>
</dbReference>
<dbReference type="InterPro" id="IPR017441">
    <property type="entry name" value="Protein_kinase_ATP_BS"/>
</dbReference>
<dbReference type="InterPro" id="IPR042709">
    <property type="entry name" value="TSSK3_STKc"/>
</dbReference>
<dbReference type="PANTHER" id="PTHR24346">
    <property type="entry name" value="MAP/MICROTUBULE AFFINITY-REGULATING KINASE"/>
    <property type="match status" value="1"/>
</dbReference>
<dbReference type="PANTHER" id="PTHR24346:SF102">
    <property type="entry name" value="TESTIS-SPECIFIC SERINE_THREONINE-PROTEIN KINASE 1"/>
    <property type="match status" value="1"/>
</dbReference>
<dbReference type="Pfam" id="PF00069">
    <property type="entry name" value="Pkinase"/>
    <property type="match status" value="1"/>
</dbReference>
<dbReference type="PIRSF" id="PIRSF000654">
    <property type="entry name" value="Integrin-linked_kinase"/>
    <property type="match status" value="1"/>
</dbReference>
<dbReference type="SMART" id="SM00220">
    <property type="entry name" value="S_TKc"/>
    <property type="match status" value="1"/>
</dbReference>
<dbReference type="SUPFAM" id="SSF56112">
    <property type="entry name" value="Protein kinase-like (PK-like)"/>
    <property type="match status" value="1"/>
</dbReference>
<dbReference type="PROSITE" id="PS00107">
    <property type="entry name" value="PROTEIN_KINASE_ATP"/>
    <property type="match status" value="1"/>
</dbReference>
<dbReference type="PROSITE" id="PS50011">
    <property type="entry name" value="PROTEIN_KINASE_DOM"/>
    <property type="match status" value="1"/>
</dbReference>
<organism>
    <name type="scientific">Mus musculus</name>
    <name type="common">Mouse</name>
    <dbReference type="NCBI Taxonomy" id="10090"/>
    <lineage>
        <taxon>Eukaryota</taxon>
        <taxon>Metazoa</taxon>
        <taxon>Chordata</taxon>
        <taxon>Craniata</taxon>
        <taxon>Vertebrata</taxon>
        <taxon>Euteleostomi</taxon>
        <taxon>Mammalia</taxon>
        <taxon>Eutheria</taxon>
        <taxon>Euarchontoglires</taxon>
        <taxon>Glires</taxon>
        <taxon>Rodentia</taxon>
        <taxon>Myomorpha</taxon>
        <taxon>Muroidea</taxon>
        <taxon>Muridae</taxon>
        <taxon>Murinae</taxon>
        <taxon>Mus</taxon>
        <taxon>Mus</taxon>
    </lineage>
</organism>
<sequence length="268" mass="30209">MEDFLLSNGYQLGKTIGEGTYSKVKEAFSKKHQRKVAIKIIDKMGGPEEFIQRFLPRELQIVRTLDHKNIIQVYEMLESADGKIYLVMELAEGGDVFDCVLNGGPLPESRAKALFRQMVEAIRYCHGCGVAHRDLKCENALLQGFNLKLTDFGFAKVLPKSRRELSQTFCGSTAYAAPEVLQGIPHDSKKGDVWSMGVVLYVMLCASLPFDDTDIPKMLWQQQKGVSFPTHLGISTECQDLLKRLLEPDMILRPSIEEVSWHPWLAST</sequence>
<protein>
    <recommendedName>
        <fullName evidence="9">Testis-specific serine/threonine-protein kinase 3</fullName>
        <shortName>TSK-3</shortName>
        <shortName evidence="7">TSSK-3</shortName>
        <shortName evidence="7">Testis-specific kinase 3</shortName>
        <ecNumber evidence="5">2.7.11.1</ecNumber>
    </recommendedName>
    <alternativeName>
        <fullName evidence="1">Serine/threonine-protein kinase 22C</fullName>
    </alternativeName>
</protein>
<proteinExistence type="evidence at protein level"/>
<evidence type="ECO:0000250" key="1">
    <source>
        <dbReference type="UniProtKB" id="Q96PN8"/>
    </source>
</evidence>
<evidence type="ECO:0000255" key="2">
    <source>
        <dbReference type="PROSITE-ProRule" id="PRU00159"/>
    </source>
</evidence>
<evidence type="ECO:0000269" key="3">
    <source>
    </source>
</evidence>
<evidence type="ECO:0000269" key="4">
    <source>
    </source>
</evidence>
<evidence type="ECO:0000269" key="5">
    <source>
    </source>
</evidence>
<evidence type="ECO:0000269" key="6">
    <source>
    </source>
</evidence>
<evidence type="ECO:0000303" key="7">
    <source>
    </source>
</evidence>
<evidence type="ECO:0000303" key="8">
    <source>
    </source>
</evidence>
<evidence type="ECO:0000305" key="9"/>
<evidence type="ECO:0000305" key="10">
    <source>
    </source>
</evidence>
<evidence type="ECO:0000305" key="11">
    <source>
    </source>
</evidence>
<evidence type="ECO:0000312" key="12">
    <source>
        <dbReference type="MGI" id="MGI:1929914"/>
    </source>
</evidence>
<gene>
    <name evidence="7 12" type="primary">Tssk3</name>
    <name evidence="1" type="synonym">Stk22c</name>
    <name evidence="8" type="synonym">Stk22d</name>
</gene>
<reference key="1">
    <citation type="journal article" date="2001" name="Genomics">
        <title>Cloning and chromosomal localization of a gene encoding a novel serine/threonine kinase belonging to the subfamily of testis-specific kinases.</title>
        <authorList>
            <person name="Visconti P.E."/>
            <person name="Hao Z."/>
            <person name="Purdon M.A."/>
            <person name="Stein P."/>
            <person name="Balsara B.R."/>
            <person name="Testa J.R."/>
            <person name="Herr J.C."/>
            <person name="Moss S.B."/>
            <person name="Kopf G.S."/>
        </authorList>
    </citation>
    <scope>NUCLEOTIDE SEQUENCE [MRNA]</scope>
    <scope>DEVELOPMENTAL STAGE</scope>
    <source>
        <tissue>Germ cell</tissue>
    </source>
</reference>
<reference key="2">
    <citation type="journal article" date="2000" name="Mech. Dev.">
        <title>A novel member of the testis specific serine kinase family, tssk-3, expressed in the Leydig cells of sexually mature mice.</title>
        <authorList>
            <person name="Zuercher G."/>
            <person name="Rohrbach V."/>
            <person name="Andres A.-C."/>
            <person name="Ziemiecki A."/>
        </authorList>
    </citation>
    <scope>NUCLEOTIDE SEQUENCE [MRNA]</scope>
    <scope>TISSUE SPECIFICITY</scope>
    <source>
        <tissue>Testis</tissue>
    </source>
</reference>
<reference key="3">
    <citation type="journal article" date="2005" name="Science">
        <title>The transcriptional landscape of the mammalian genome.</title>
        <authorList>
            <person name="Carninci P."/>
            <person name="Kasukawa T."/>
            <person name="Katayama S."/>
            <person name="Gough J."/>
            <person name="Frith M.C."/>
            <person name="Maeda N."/>
            <person name="Oyama R."/>
            <person name="Ravasi T."/>
            <person name="Lenhard B."/>
            <person name="Wells C."/>
            <person name="Kodzius R."/>
            <person name="Shimokawa K."/>
            <person name="Bajic V.B."/>
            <person name="Brenner S.E."/>
            <person name="Batalov S."/>
            <person name="Forrest A.R."/>
            <person name="Zavolan M."/>
            <person name="Davis M.J."/>
            <person name="Wilming L.G."/>
            <person name="Aidinis V."/>
            <person name="Allen J.E."/>
            <person name="Ambesi-Impiombato A."/>
            <person name="Apweiler R."/>
            <person name="Aturaliya R.N."/>
            <person name="Bailey T.L."/>
            <person name="Bansal M."/>
            <person name="Baxter L."/>
            <person name="Beisel K.W."/>
            <person name="Bersano T."/>
            <person name="Bono H."/>
            <person name="Chalk A.M."/>
            <person name="Chiu K.P."/>
            <person name="Choudhary V."/>
            <person name="Christoffels A."/>
            <person name="Clutterbuck D.R."/>
            <person name="Crowe M.L."/>
            <person name="Dalla E."/>
            <person name="Dalrymple B.P."/>
            <person name="de Bono B."/>
            <person name="Della Gatta G."/>
            <person name="di Bernardo D."/>
            <person name="Down T."/>
            <person name="Engstrom P."/>
            <person name="Fagiolini M."/>
            <person name="Faulkner G."/>
            <person name="Fletcher C.F."/>
            <person name="Fukushima T."/>
            <person name="Furuno M."/>
            <person name="Futaki S."/>
            <person name="Gariboldi M."/>
            <person name="Georgii-Hemming P."/>
            <person name="Gingeras T.R."/>
            <person name="Gojobori T."/>
            <person name="Green R.E."/>
            <person name="Gustincich S."/>
            <person name="Harbers M."/>
            <person name="Hayashi Y."/>
            <person name="Hensch T.K."/>
            <person name="Hirokawa N."/>
            <person name="Hill D."/>
            <person name="Huminiecki L."/>
            <person name="Iacono M."/>
            <person name="Ikeo K."/>
            <person name="Iwama A."/>
            <person name="Ishikawa T."/>
            <person name="Jakt M."/>
            <person name="Kanapin A."/>
            <person name="Katoh M."/>
            <person name="Kawasawa Y."/>
            <person name="Kelso J."/>
            <person name="Kitamura H."/>
            <person name="Kitano H."/>
            <person name="Kollias G."/>
            <person name="Krishnan S.P."/>
            <person name="Kruger A."/>
            <person name="Kummerfeld S.K."/>
            <person name="Kurochkin I.V."/>
            <person name="Lareau L.F."/>
            <person name="Lazarevic D."/>
            <person name="Lipovich L."/>
            <person name="Liu J."/>
            <person name="Liuni S."/>
            <person name="McWilliam S."/>
            <person name="Madan Babu M."/>
            <person name="Madera M."/>
            <person name="Marchionni L."/>
            <person name="Matsuda H."/>
            <person name="Matsuzawa S."/>
            <person name="Miki H."/>
            <person name="Mignone F."/>
            <person name="Miyake S."/>
            <person name="Morris K."/>
            <person name="Mottagui-Tabar S."/>
            <person name="Mulder N."/>
            <person name="Nakano N."/>
            <person name="Nakauchi H."/>
            <person name="Ng P."/>
            <person name="Nilsson R."/>
            <person name="Nishiguchi S."/>
            <person name="Nishikawa S."/>
            <person name="Nori F."/>
            <person name="Ohara O."/>
            <person name="Okazaki Y."/>
            <person name="Orlando V."/>
            <person name="Pang K.C."/>
            <person name="Pavan W.J."/>
            <person name="Pavesi G."/>
            <person name="Pesole G."/>
            <person name="Petrovsky N."/>
            <person name="Piazza S."/>
            <person name="Reed J."/>
            <person name="Reid J.F."/>
            <person name="Ring B.Z."/>
            <person name="Ringwald M."/>
            <person name="Rost B."/>
            <person name="Ruan Y."/>
            <person name="Salzberg S.L."/>
            <person name="Sandelin A."/>
            <person name="Schneider C."/>
            <person name="Schoenbach C."/>
            <person name="Sekiguchi K."/>
            <person name="Semple C.A."/>
            <person name="Seno S."/>
            <person name="Sessa L."/>
            <person name="Sheng Y."/>
            <person name="Shibata Y."/>
            <person name="Shimada H."/>
            <person name="Shimada K."/>
            <person name="Silva D."/>
            <person name="Sinclair B."/>
            <person name="Sperling S."/>
            <person name="Stupka E."/>
            <person name="Sugiura K."/>
            <person name="Sultana R."/>
            <person name="Takenaka Y."/>
            <person name="Taki K."/>
            <person name="Tammoja K."/>
            <person name="Tan S.L."/>
            <person name="Tang S."/>
            <person name="Taylor M.S."/>
            <person name="Tegner J."/>
            <person name="Teichmann S.A."/>
            <person name="Ueda H.R."/>
            <person name="van Nimwegen E."/>
            <person name="Verardo R."/>
            <person name="Wei C.L."/>
            <person name="Yagi K."/>
            <person name="Yamanishi H."/>
            <person name="Zabarovsky E."/>
            <person name="Zhu S."/>
            <person name="Zimmer A."/>
            <person name="Hide W."/>
            <person name="Bult C."/>
            <person name="Grimmond S.M."/>
            <person name="Teasdale R.D."/>
            <person name="Liu E.T."/>
            <person name="Brusic V."/>
            <person name="Quackenbush J."/>
            <person name="Wahlestedt C."/>
            <person name="Mattick J.S."/>
            <person name="Hume D.A."/>
            <person name="Kai C."/>
            <person name="Sasaki D."/>
            <person name="Tomaru Y."/>
            <person name="Fukuda S."/>
            <person name="Kanamori-Katayama M."/>
            <person name="Suzuki M."/>
            <person name="Aoki J."/>
            <person name="Arakawa T."/>
            <person name="Iida J."/>
            <person name="Imamura K."/>
            <person name="Itoh M."/>
            <person name="Kato T."/>
            <person name="Kawaji H."/>
            <person name="Kawagashira N."/>
            <person name="Kawashima T."/>
            <person name="Kojima M."/>
            <person name="Kondo S."/>
            <person name="Konno H."/>
            <person name="Nakano K."/>
            <person name="Ninomiya N."/>
            <person name="Nishio T."/>
            <person name="Okada M."/>
            <person name="Plessy C."/>
            <person name="Shibata K."/>
            <person name="Shiraki T."/>
            <person name="Suzuki S."/>
            <person name="Tagami M."/>
            <person name="Waki K."/>
            <person name="Watahiki A."/>
            <person name="Okamura-Oho Y."/>
            <person name="Suzuki H."/>
            <person name="Kawai J."/>
            <person name="Hayashizaki Y."/>
        </authorList>
    </citation>
    <scope>NUCLEOTIDE SEQUENCE [LARGE SCALE MRNA]</scope>
    <source>
        <strain>C57BL/6J</strain>
        <tissue>Testis</tissue>
    </source>
</reference>
<reference key="4">
    <citation type="journal article" date="2004" name="Genome Res.">
        <title>The status, quality, and expansion of the NIH full-length cDNA project: the Mammalian Gene Collection (MGC).</title>
        <authorList>
            <consortium name="The MGC Project Team"/>
        </authorList>
    </citation>
    <scope>NUCLEOTIDE SEQUENCE [LARGE SCALE MRNA]</scope>
    <source>
        <tissue>Testis</tissue>
    </source>
</reference>
<reference key="5">
    <citation type="journal article" date="2005" name="FEBS J.">
        <title>Characterization of testis-specific serine-threonine kinase 3 and its activation by phosphoinositide-dependent kinase-1-dependent signalling.</title>
        <authorList>
            <person name="Bucko-Justyna M."/>
            <person name="Lipinski L."/>
            <person name="Burgering B.M."/>
            <person name="Trzeciak L."/>
        </authorList>
    </citation>
    <scope>FUNCTION</scope>
    <scope>CATALYTIC ACTIVITY</scope>
    <scope>BIOPHYSICOCHEMICAL PROPERTIES</scope>
    <scope>ACTIVITY REGULATION</scope>
    <scope>PHOSPHORYLATION AT SER-166 AND THR-168</scope>
    <scope>MUTAGENESIS OF LYS-39; SER-166 AND THR-168</scope>
</reference>
<reference key="6">
    <citation type="journal article" date="2021" name="Mol. Reprod. Dev.">
        <title>TSSK3, a novel target for male contraception, is required for spermiogenesis.</title>
        <authorList>
            <person name="Nayyab S."/>
            <person name="Gervasi M.G."/>
            <person name="Tourzani D.A."/>
            <person name="Caraballo D.A."/>
            <person name="Jha K.N."/>
            <person name="Teves M.E."/>
            <person name="Cui W."/>
            <person name="Georg G.I."/>
            <person name="Visconti P.E."/>
            <person name="Salicioni A.M."/>
        </authorList>
    </citation>
    <scope>FUNCTION</scope>
    <scope>SUBCELLULAR LOCATION</scope>
    <scope>DISRUPTION PHENOTYPE</scope>
</reference>
<name>TSSK3_MOUSE</name>
<feature type="chain" id="PRO_0000086771" description="Testis-specific serine/threonine-protein kinase 3">
    <location>
        <begin position="1"/>
        <end position="268"/>
    </location>
</feature>
<feature type="domain" description="Protein kinase" evidence="2">
    <location>
        <begin position="10"/>
        <end position="265"/>
    </location>
</feature>
<feature type="active site" description="Proton acceptor" evidence="2">
    <location>
        <position position="134"/>
    </location>
</feature>
<feature type="binding site" evidence="2">
    <location>
        <begin position="16"/>
        <end position="24"/>
    </location>
    <ligand>
        <name>ATP</name>
        <dbReference type="ChEBI" id="CHEBI:30616"/>
    </ligand>
</feature>
<feature type="binding site" evidence="2 11">
    <location>
        <position position="39"/>
    </location>
    <ligand>
        <name>ATP</name>
        <dbReference type="ChEBI" id="CHEBI:30616"/>
    </ligand>
</feature>
<feature type="modified residue" description="Phosphoserine; by autocatalysis" evidence="5">
    <location>
        <position position="166"/>
    </location>
</feature>
<feature type="modified residue" description="Phosphothreonine; by PDPK1" evidence="5">
    <location>
        <position position="168"/>
    </location>
</feature>
<feature type="mutagenesis site" description="Abolished serine/threonine protein kinase activity." evidence="5">
    <original>K</original>
    <variation>R</variation>
    <location>
        <position position="39"/>
    </location>
</feature>
<feature type="mutagenesis site" description="Abolished autophosphorylation." evidence="5">
    <original>S</original>
    <variation>A</variation>
    <location>
        <position position="166"/>
    </location>
</feature>
<feature type="mutagenesis site" description="Mimics phosphorylation, preventing autophosphorylation." evidence="5">
    <original>S</original>
    <variation>D</variation>
    <location>
        <position position="166"/>
    </location>
</feature>
<feature type="mutagenesis site" description="Abolished serine/threonine protein kinase activity." evidence="5">
    <original>T</original>
    <variation>A</variation>
    <location>
        <position position="168"/>
    </location>
</feature>
<feature type="mutagenesis site" description="Mimics phosphorylation; does not affect ability to autophosphorylate." evidence="5">
    <original>T</original>
    <variation>D</variation>
    <location>
        <position position="168"/>
    </location>
</feature>